<keyword id="KW-0678">Repressor</keyword>
<keyword id="KW-0346">Stress response</keyword>
<keyword id="KW-0804">Transcription</keyword>
<keyword id="KW-0805">Transcription regulation</keyword>
<sequence length="325" mass="37016">MITDRQLSILNAIVEDYVDFGQPVGSKTLIERHNLNVSPATIRNEMKQLEDLNYIEKTHSSSGRSPSQLGFRYYVNRLLEQTSHQKTNKLRRLNQLLVENQYDVSSALTYFADELSNISQYTTLVVHPNHKQDIINNVHLIRANPNLVIMVIVFSSGHVEHVHLASDIPFNNDKLNTISNFVTNKLTEFNQNLQDDIVSFVQSEQEEIFINKLLNTMNNHISNQSNSIYMGGKVKLIDALNESNVSSIQPILQYIESNRIAELLQDISSPNINVKIGNEIDDSLSDISIVTSQYHFDETLKGQIAVIGPTAMHYQNVIQLLNRIW</sequence>
<gene>
    <name evidence="1" type="primary">hrcA</name>
    <name type="ordered locus">NWMN_1485</name>
</gene>
<protein>
    <recommendedName>
        <fullName evidence="1">Heat-inducible transcription repressor HrcA</fullName>
    </recommendedName>
</protein>
<name>HRCA_STAAE</name>
<evidence type="ECO:0000255" key="1">
    <source>
        <dbReference type="HAMAP-Rule" id="MF_00081"/>
    </source>
</evidence>
<comment type="function">
    <text evidence="1">Negative regulator of class I heat shock genes (grpE-dnaK-dnaJ and groELS operons). Prevents heat-shock induction of these operons.</text>
</comment>
<comment type="similarity">
    <text evidence="1">Belongs to the HrcA family.</text>
</comment>
<dbReference type="EMBL" id="AP009351">
    <property type="protein sequence ID" value="BAF67757.1"/>
    <property type="molecule type" value="Genomic_DNA"/>
</dbReference>
<dbReference type="RefSeq" id="WP_000627140.1">
    <property type="nucleotide sequence ID" value="NZ_JBBIAE010000001.1"/>
</dbReference>
<dbReference type="SMR" id="A6QHC5"/>
<dbReference type="KEGG" id="sae:NWMN_1485"/>
<dbReference type="HOGENOM" id="CLU_050019_1_0_9"/>
<dbReference type="Proteomes" id="UP000006386">
    <property type="component" value="Chromosome"/>
</dbReference>
<dbReference type="GO" id="GO:0003677">
    <property type="term" value="F:DNA binding"/>
    <property type="evidence" value="ECO:0007669"/>
    <property type="project" value="InterPro"/>
</dbReference>
<dbReference type="GO" id="GO:0045892">
    <property type="term" value="P:negative regulation of DNA-templated transcription"/>
    <property type="evidence" value="ECO:0007669"/>
    <property type="project" value="UniProtKB-UniRule"/>
</dbReference>
<dbReference type="FunFam" id="1.10.10.10:FF:000049">
    <property type="entry name" value="Heat-inducible transcription repressor HrcA"/>
    <property type="match status" value="1"/>
</dbReference>
<dbReference type="Gene3D" id="3.30.450.40">
    <property type="match status" value="1"/>
</dbReference>
<dbReference type="Gene3D" id="3.30.390.60">
    <property type="entry name" value="Heat-inducible transcription repressor hrca homolog, domain 3"/>
    <property type="match status" value="1"/>
</dbReference>
<dbReference type="Gene3D" id="1.10.10.10">
    <property type="entry name" value="Winged helix-like DNA-binding domain superfamily/Winged helix DNA-binding domain"/>
    <property type="match status" value="1"/>
</dbReference>
<dbReference type="HAMAP" id="MF_00081">
    <property type="entry name" value="HrcA"/>
    <property type="match status" value="1"/>
</dbReference>
<dbReference type="InterPro" id="IPR029016">
    <property type="entry name" value="GAF-like_dom_sf"/>
</dbReference>
<dbReference type="InterPro" id="IPR002571">
    <property type="entry name" value="HrcA"/>
</dbReference>
<dbReference type="InterPro" id="IPR021153">
    <property type="entry name" value="HrcA_C"/>
</dbReference>
<dbReference type="InterPro" id="IPR036388">
    <property type="entry name" value="WH-like_DNA-bd_sf"/>
</dbReference>
<dbReference type="InterPro" id="IPR036390">
    <property type="entry name" value="WH_DNA-bd_sf"/>
</dbReference>
<dbReference type="InterPro" id="IPR023120">
    <property type="entry name" value="WHTH_transcript_rep_HrcA_IDD"/>
</dbReference>
<dbReference type="NCBIfam" id="TIGR00331">
    <property type="entry name" value="hrcA"/>
    <property type="match status" value="1"/>
</dbReference>
<dbReference type="PANTHER" id="PTHR34824">
    <property type="entry name" value="HEAT-INDUCIBLE TRANSCRIPTION REPRESSOR HRCA"/>
    <property type="match status" value="1"/>
</dbReference>
<dbReference type="PANTHER" id="PTHR34824:SF1">
    <property type="entry name" value="HEAT-INDUCIBLE TRANSCRIPTION REPRESSOR HRCA"/>
    <property type="match status" value="1"/>
</dbReference>
<dbReference type="Pfam" id="PF01628">
    <property type="entry name" value="HrcA"/>
    <property type="match status" value="1"/>
</dbReference>
<dbReference type="PIRSF" id="PIRSF005485">
    <property type="entry name" value="HrcA"/>
    <property type="match status" value="1"/>
</dbReference>
<dbReference type="SUPFAM" id="SSF55781">
    <property type="entry name" value="GAF domain-like"/>
    <property type="match status" value="1"/>
</dbReference>
<dbReference type="SUPFAM" id="SSF46785">
    <property type="entry name" value="Winged helix' DNA-binding domain"/>
    <property type="match status" value="1"/>
</dbReference>
<proteinExistence type="inferred from homology"/>
<feature type="chain" id="PRO_1000071214" description="Heat-inducible transcription repressor HrcA">
    <location>
        <begin position="1"/>
        <end position="325"/>
    </location>
</feature>
<reference key="1">
    <citation type="journal article" date="2008" name="J. Bacteriol.">
        <title>Genome sequence of Staphylococcus aureus strain Newman and comparative analysis of staphylococcal genomes: polymorphism and evolution of two major pathogenicity islands.</title>
        <authorList>
            <person name="Baba T."/>
            <person name="Bae T."/>
            <person name="Schneewind O."/>
            <person name="Takeuchi F."/>
            <person name="Hiramatsu K."/>
        </authorList>
    </citation>
    <scope>NUCLEOTIDE SEQUENCE [LARGE SCALE GENOMIC DNA]</scope>
    <source>
        <strain>Newman</strain>
    </source>
</reference>
<organism>
    <name type="scientific">Staphylococcus aureus (strain Newman)</name>
    <dbReference type="NCBI Taxonomy" id="426430"/>
    <lineage>
        <taxon>Bacteria</taxon>
        <taxon>Bacillati</taxon>
        <taxon>Bacillota</taxon>
        <taxon>Bacilli</taxon>
        <taxon>Bacillales</taxon>
        <taxon>Staphylococcaceae</taxon>
        <taxon>Staphylococcus</taxon>
    </lineage>
</organism>
<accession>A6QHC5</accession>